<sequence>MGIKVYKPTTNGRRNMTSLDFAEITTSTPEKSLLVSLKSKAGRNNNGRITVRHQGGGHKRHYRLIDFKRNKDGVEAVVKTIEYDPNRTANIALVHYTDGVKAYIIAPKGLEVGQRIVSGPDADIKVGNALPLANIPVGTVVHNIELKPGKGGELVRAAGASAQVLGQEGKYVLVRLQSGEVRMILGTCRATIGTVGNEQQSLVNIGKAGRSRWKGIRPTVRGSVMNPNDHPHGGGEGKAPVGRKAPSTPWGKPALGLKTRNKKAKSDKLIVRRRNEK</sequence>
<dbReference type="EMBL" id="CP000260">
    <property type="protein sequence ID" value="ABF33114.1"/>
    <property type="molecule type" value="Genomic_DNA"/>
</dbReference>
<dbReference type="RefSeq" id="WP_002986654.1">
    <property type="nucleotide sequence ID" value="NZ_CVUH01000001.1"/>
</dbReference>
<dbReference type="SMR" id="Q1JJ59"/>
<dbReference type="GeneID" id="83689570"/>
<dbReference type="KEGG" id="sph:MGAS10270_Spy0049"/>
<dbReference type="HOGENOM" id="CLU_036235_2_1_9"/>
<dbReference type="Proteomes" id="UP000002436">
    <property type="component" value="Chromosome"/>
</dbReference>
<dbReference type="GO" id="GO:0015934">
    <property type="term" value="C:large ribosomal subunit"/>
    <property type="evidence" value="ECO:0007669"/>
    <property type="project" value="InterPro"/>
</dbReference>
<dbReference type="GO" id="GO:0019843">
    <property type="term" value="F:rRNA binding"/>
    <property type="evidence" value="ECO:0007669"/>
    <property type="project" value="UniProtKB-UniRule"/>
</dbReference>
<dbReference type="GO" id="GO:0003735">
    <property type="term" value="F:structural constituent of ribosome"/>
    <property type="evidence" value="ECO:0007669"/>
    <property type="project" value="InterPro"/>
</dbReference>
<dbReference type="GO" id="GO:0016740">
    <property type="term" value="F:transferase activity"/>
    <property type="evidence" value="ECO:0007669"/>
    <property type="project" value="InterPro"/>
</dbReference>
<dbReference type="GO" id="GO:0002181">
    <property type="term" value="P:cytoplasmic translation"/>
    <property type="evidence" value="ECO:0007669"/>
    <property type="project" value="TreeGrafter"/>
</dbReference>
<dbReference type="FunFam" id="2.30.30.30:FF:000001">
    <property type="entry name" value="50S ribosomal protein L2"/>
    <property type="match status" value="1"/>
</dbReference>
<dbReference type="FunFam" id="2.40.50.140:FF:000003">
    <property type="entry name" value="50S ribosomal protein L2"/>
    <property type="match status" value="1"/>
</dbReference>
<dbReference type="FunFam" id="4.10.950.10:FF:000001">
    <property type="entry name" value="50S ribosomal protein L2"/>
    <property type="match status" value="1"/>
</dbReference>
<dbReference type="Gene3D" id="2.30.30.30">
    <property type="match status" value="1"/>
</dbReference>
<dbReference type="Gene3D" id="2.40.50.140">
    <property type="entry name" value="Nucleic acid-binding proteins"/>
    <property type="match status" value="1"/>
</dbReference>
<dbReference type="Gene3D" id="4.10.950.10">
    <property type="entry name" value="Ribosomal protein L2, domain 3"/>
    <property type="match status" value="1"/>
</dbReference>
<dbReference type="HAMAP" id="MF_01320_B">
    <property type="entry name" value="Ribosomal_uL2_B"/>
    <property type="match status" value="1"/>
</dbReference>
<dbReference type="InterPro" id="IPR012340">
    <property type="entry name" value="NA-bd_OB-fold"/>
</dbReference>
<dbReference type="InterPro" id="IPR014722">
    <property type="entry name" value="Rib_uL2_dom2"/>
</dbReference>
<dbReference type="InterPro" id="IPR002171">
    <property type="entry name" value="Ribosomal_uL2"/>
</dbReference>
<dbReference type="InterPro" id="IPR005880">
    <property type="entry name" value="Ribosomal_uL2_bac/org-type"/>
</dbReference>
<dbReference type="InterPro" id="IPR022669">
    <property type="entry name" value="Ribosomal_uL2_C"/>
</dbReference>
<dbReference type="InterPro" id="IPR022671">
    <property type="entry name" value="Ribosomal_uL2_CS"/>
</dbReference>
<dbReference type="InterPro" id="IPR014726">
    <property type="entry name" value="Ribosomal_uL2_dom3"/>
</dbReference>
<dbReference type="InterPro" id="IPR022666">
    <property type="entry name" value="Ribosomal_uL2_RNA-bd_dom"/>
</dbReference>
<dbReference type="InterPro" id="IPR008991">
    <property type="entry name" value="Translation_prot_SH3-like_sf"/>
</dbReference>
<dbReference type="NCBIfam" id="TIGR01171">
    <property type="entry name" value="rplB_bact"/>
    <property type="match status" value="1"/>
</dbReference>
<dbReference type="PANTHER" id="PTHR13691:SF5">
    <property type="entry name" value="LARGE RIBOSOMAL SUBUNIT PROTEIN UL2M"/>
    <property type="match status" value="1"/>
</dbReference>
<dbReference type="PANTHER" id="PTHR13691">
    <property type="entry name" value="RIBOSOMAL PROTEIN L2"/>
    <property type="match status" value="1"/>
</dbReference>
<dbReference type="Pfam" id="PF00181">
    <property type="entry name" value="Ribosomal_L2"/>
    <property type="match status" value="1"/>
</dbReference>
<dbReference type="Pfam" id="PF03947">
    <property type="entry name" value="Ribosomal_L2_C"/>
    <property type="match status" value="1"/>
</dbReference>
<dbReference type="PIRSF" id="PIRSF002158">
    <property type="entry name" value="Ribosomal_L2"/>
    <property type="match status" value="1"/>
</dbReference>
<dbReference type="SMART" id="SM01383">
    <property type="entry name" value="Ribosomal_L2"/>
    <property type="match status" value="1"/>
</dbReference>
<dbReference type="SMART" id="SM01382">
    <property type="entry name" value="Ribosomal_L2_C"/>
    <property type="match status" value="1"/>
</dbReference>
<dbReference type="SUPFAM" id="SSF50249">
    <property type="entry name" value="Nucleic acid-binding proteins"/>
    <property type="match status" value="1"/>
</dbReference>
<dbReference type="SUPFAM" id="SSF50104">
    <property type="entry name" value="Translation proteins SH3-like domain"/>
    <property type="match status" value="1"/>
</dbReference>
<dbReference type="PROSITE" id="PS00467">
    <property type="entry name" value="RIBOSOMAL_L2"/>
    <property type="match status" value="1"/>
</dbReference>
<gene>
    <name evidence="1" type="primary">rplB</name>
    <name type="ordered locus">MGAS10270_Spy0049</name>
</gene>
<reference key="1">
    <citation type="journal article" date="2006" name="Proc. Natl. Acad. Sci. U.S.A.">
        <title>Molecular genetic anatomy of inter- and intraserotype variation in the human bacterial pathogen group A Streptococcus.</title>
        <authorList>
            <person name="Beres S.B."/>
            <person name="Richter E.W."/>
            <person name="Nagiec M.J."/>
            <person name="Sumby P."/>
            <person name="Porcella S.F."/>
            <person name="DeLeo F.R."/>
            <person name="Musser J.M."/>
        </authorList>
    </citation>
    <scope>NUCLEOTIDE SEQUENCE [LARGE SCALE GENOMIC DNA]</scope>
    <source>
        <strain>MGAS10270</strain>
    </source>
</reference>
<organism>
    <name type="scientific">Streptococcus pyogenes serotype M2 (strain MGAS10270)</name>
    <dbReference type="NCBI Taxonomy" id="370552"/>
    <lineage>
        <taxon>Bacteria</taxon>
        <taxon>Bacillati</taxon>
        <taxon>Bacillota</taxon>
        <taxon>Bacilli</taxon>
        <taxon>Lactobacillales</taxon>
        <taxon>Streptococcaceae</taxon>
        <taxon>Streptococcus</taxon>
    </lineage>
</organism>
<protein>
    <recommendedName>
        <fullName evidence="1">Large ribosomal subunit protein uL2</fullName>
    </recommendedName>
    <alternativeName>
        <fullName evidence="3">50S ribosomal protein L2</fullName>
    </alternativeName>
</protein>
<evidence type="ECO:0000255" key="1">
    <source>
        <dbReference type="HAMAP-Rule" id="MF_01320"/>
    </source>
</evidence>
<evidence type="ECO:0000256" key="2">
    <source>
        <dbReference type="SAM" id="MobiDB-lite"/>
    </source>
</evidence>
<evidence type="ECO:0000305" key="3"/>
<feature type="chain" id="PRO_0000310023" description="Large ribosomal subunit protein uL2">
    <location>
        <begin position="1"/>
        <end position="277"/>
    </location>
</feature>
<feature type="region of interest" description="Disordered" evidence="2">
    <location>
        <begin position="219"/>
        <end position="277"/>
    </location>
</feature>
<feature type="compositionally biased region" description="Basic and acidic residues" evidence="2">
    <location>
        <begin position="264"/>
        <end position="277"/>
    </location>
</feature>
<keyword id="KW-0687">Ribonucleoprotein</keyword>
<keyword id="KW-0689">Ribosomal protein</keyword>
<keyword id="KW-0694">RNA-binding</keyword>
<keyword id="KW-0699">rRNA-binding</keyword>
<proteinExistence type="inferred from homology"/>
<accession>Q1JJ59</accession>
<name>RL2_STRPD</name>
<comment type="function">
    <text evidence="1">One of the primary rRNA binding proteins. Required for association of the 30S and 50S subunits to form the 70S ribosome, for tRNA binding and peptide bond formation. It has been suggested to have peptidyltransferase activity; this is somewhat controversial. Makes several contacts with the 16S rRNA in the 70S ribosome.</text>
</comment>
<comment type="subunit">
    <text evidence="1">Part of the 50S ribosomal subunit. Forms a bridge to the 30S subunit in the 70S ribosome.</text>
</comment>
<comment type="similarity">
    <text evidence="1">Belongs to the universal ribosomal protein uL2 family.</text>
</comment>